<proteinExistence type="inferred from homology"/>
<feature type="chain" id="PRO_0000231293" description="UDP-N-acetylglucosamine 1-carboxyvinyltransferase">
    <location>
        <begin position="1"/>
        <end position="417"/>
    </location>
</feature>
<feature type="active site" description="Proton donor" evidence="1">
    <location>
        <position position="117"/>
    </location>
</feature>
<feature type="binding site" evidence="1">
    <location>
        <begin position="22"/>
        <end position="23"/>
    </location>
    <ligand>
        <name>phosphoenolpyruvate</name>
        <dbReference type="ChEBI" id="CHEBI:58702"/>
    </ligand>
</feature>
<feature type="binding site" evidence="1">
    <location>
        <position position="93"/>
    </location>
    <ligand>
        <name>UDP-N-acetyl-alpha-D-glucosamine</name>
        <dbReference type="ChEBI" id="CHEBI:57705"/>
    </ligand>
</feature>
<feature type="binding site" evidence="1">
    <location>
        <begin position="122"/>
        <end position="126"/>
    </location>
    <ligand>
        <name>UDP-N-acetyl-alpha-D-glucosamine</name>
        <dbReference type="ChEBI" id="CHEBI:57705"/>
    </ligand>
</feature>
<feature type="binding site" evidence="1">
    <location>
        <position position="305"/>
    </location>
    <ligand>
        <name>UDP-N-acetyl-alpha-D-glucosamine</name>
        <dbReference type="ChEBI" id="CHEBI:57705"/>
    </ligand>
</feature>
<feature type="binding site" evidence="1">
    <location>
        <position position="327"/>
    </location>
    <ligand>
        <name>UDP-N-acetyl-alpha-D-glucosamine</name>
        <dbReference type="ChEBI" id="CHEBI:57705"/>
    </ligand>
</feature>
<feature type="modified residue" description="2-(S-cysteinyl)pyruvic acid O-phosphothioketal" evidence="1">
    <location>
        <position position="117"/>
    </location>
</feature>
<gene>
    <name evidence="1" type="primary">murA</name>
    <name type="ordered locus">Tbd_1891</name>
</gene>
<reference key="1">
    <citation type="journal article" date="2006" name="J. Bacteriol.">
        <title>The genome sequence of the obligately chemolithoautotrophic, facultatively anaerobic bacterium Thiobacillus denitrificans.</title>
        <authorList>
            <person name="Beller H.R."/>
            <person name="Chain P.S."/>
            <person name="Letain T.E."/>
            <person name="Chakicherla A."/>
            <person name="Larimer F.W."/>
            <person name="Richardson P.M."/>
            <person name="Coleman M.A."/>
            <person name="Wood A.P."/>
            <person name="Kelly D.P."/>
        </authorList>
    </citation>
    <scope>NUCLEOTIDE SEQUENCE [LARGE SCALE GENOMIC DNA]</scope>
    <source>
        <strain>ATCC 25259 / T1</strain>
    </source>
</reference>
<name>MURA_THIDA</name>
<protein>
    <recommendedName>
        <fullName evidence="1">UDP-N-acetylglucosamine 1-carboxyvinyltransferase</fullName>
        <ecNumber evidence="1">2.5.1.7</ecNumber>
    </recommendedName>
    <alternativeName>
        <fullName evidence="1">Enoylpyruvate transferase</fullName>
    </alternativeName>
    <alternativeName>
        <fullName evidence="1">UDP-N-acetylglucosamine enolpyruvyl transferase</fullName>
        <shortName evidence="1">EPT</shortName>
    </alternativeName>
</protein>
<comment type="function">
    <text evidence="1">Cell wall formation. Adds enolpyruvyl to UDP-N-acetylglucosamine.</text>
</comment>
<comment type="catalytic activity">
    <reaction evidence="1">
        <text>phosphoenolpyruvate + UDP-N-acetyl-alpha-D-glucosamine = UDP-N-acetyl-3-O-(1-carboxyvinyl)-alpha-D-glucosamine + phosphate</text>
        <dbReference type="Rhea" id="RHEA:18681"/>
        <dbReference type="ChEBI" id="CHEBI:43474"/>
        <dbReference type="ChEBI" id="CHEBI:57705"/>
        <dbReference type="ChEBI" id="CHEBI:58702"/>
        <dbReference type="ChEBI" id="CHEBI:68483"/>
        <dbReference type="EC" id="2.5.1.7"/>
    </reaction>
</comment>
<comment type="pathway">
    <text evidence="1">Cell wall biogenesis; peptidoglycan biosynthesis.</text>
</comment>
<comment type="subcellular location">
    <subcellularLocation>
        <location evidence="1">Cytoplasm</location>
    </subcellularLocation>
</comment>
<comment type="similarity">
    <text evidence="1">Belongs to the EPSP synthase family. MurA subfamily.</text>
</comment>
<organism>
    <name type="scientific">Thiobacillus denitrificans (strain ATCC 25259 / T1)</name>
    <dbReference type="NCBI Taxonomy" id="292415"/>
    <lineage>
        <taxon>Bacteria</taxon>
        <taxon>Pseudomonadati</taxon>
        <taxon>Pseudomonadota</taxon>
        <taxon>Betaproteobacteria</taxon>
        <taxon>Nitrosomonadales</taxon>
        <taxon>Thiobacillaceae</taxon>
        <taxon>Thiobacillus</taxon>
    </lineage>
</organism>
<dbReference type="EC" id="2.5.1.7" evidence="1"/>
<dbReference type="EMBL" id="CP000116">
    <property type="protein sequence ID" value="AAZ97844.1"/>
    <property type="molecule type" value="Genomic_DNA"/>
</dbReference>
<dbReference type="RefSeq" id="WP_011312403.1">
    <property type="nucleotide sequence ID" value="NC_007404.1"/>
</dbReference>
<dbReference type="SMR" id="Q3SHP2"/>
<dbReference type="STRING" id="292415.Tbd_1891"/>
<dbReference type="KEGG" id="tbd:Tbd_1891"/>
<dbReference type="eggNOG" id="COG0766">
    <property type="taxonomic scope" value="Bacteria"/>
</dbReference>
<dbReference type="HOGENOM" id="CLU_027387_0_0_4"/>
<dbReference type="OrthoDB" id="9803760at2"/>
<dbReference type="UniPathway" id="UPA00219"/>
<dbReference type="Proteomes" id="UP000008291">
    <property type="component" value="Chromosome"/>
</dbReference>
<dbReference type="GO" id="GO:0005737">
    <property type="term" value="C:cytoplasm"/>
    <property type="evidence" value="ECO:0007669"/>
    <property type="project" value="UniProtKB-SubCell"/>
</dbReference>
<dbReference type="GO" id="GO:0008760">
    <property type="term" value="F:UDP-N-acetylglucosamine 1-carboxyvinyltransferase activity"/>
    <property type="evidence" value="ECO:0007669"/>
    <property type="project" value="UniProtKB-UniRule"/>
</dbReference>
<dbReference type="GO" id="GO:0051301">
    <property type="term" value="P:cell division"/>
    <property type="evidence" value="ECO:0007669"/>
    <property type="project" value="UniProtKB-KW"/>
</dbReference>
<dbReference type="GO" id="GO:0071555">
    <property type="term" value="P:cell wall organization"/>
    <property type="evidence" value="ECO:0007669"/>
    <property type="project" value="UniProtKB-KW"/>
</dbReference>
<dbReference type="GO" id="GO:0009252">
    <property type="term" value="P:peptidoglycan biosynthetic process"/>
    <property type="evidence" value="ECO:0007669"/>
    <property type="project" value="UniProtKB-UniRule"/>
</dbReference>
<dbReference type="GO" id="GO:0008360">
    <property type="term" value="P:regulation of cell shape"/>
    <property type="evidence" value="ECO:0007669"/>
    <property type="project" value="UniProtKB-KW"/>
</dbReference>
<dbReference type="GO" id="GO:0019277">
    <property type="term" value="P:UDP-N-acetylgalactosamine biosynthetic process"/>
    <property type="evidence" value="ECO:0007669"/>
    <property type="project" value="InterPro"/>
</dbReference>
<dbReference type="CDD" id="cd01555">
    <property type="entry name" value="UdpNAET"/>
    <property type="match status" value="1"/>
</dbReference>
<dbReference type="FunFam" id="3.65.10.10:FF:000001">
    <property type="entry name" value="UDP-N-acetylglucosamine 1-carboxyvinyltransferase"/>
    <property type="match status" value="1"/>
</dbReference>
<dbReference type="Gene3D" id="3.65.10.10">
    <property type="entry name" value="Enolpyruvate transferase domain"/>
    <property type="match status" value="2"/>
</dbReference>
<dbReference type="HAMAP" id="MF_00111">
    <property type="entry name" value="MurA"/>
    <property type="match status" value="1"/>
</dbReference>
<dbReference type="InterPro" id="IPR001986">
    <property type="entry name" value="Enolpyruvate_Tfrase_dom"/>
</dbReference>
<dbReference type="InterPro" id="IPR036968">
    <property type="entry name" value="Enolpyruvate_Tfrase_sf"/>
</dbReference>
<dbReference type="InterPro" id="IPR050068">
    <property type="entry name" value="MurA_subfamily"/>
</dbReference>
<dbReference type="InterPro" id="IPR013792">
    <property type="entry name" value="RNA3'P_cycl/enolpyr_Trfase_a/b"/>
</dbReference>
<dbReference type="InterPro" id="IPR005750">
    <property type="entry name" value="UDP_GlcNAc_COvinyl_MurA"/>
</dbReference>
<dbReference type="NCBIfam" id="TIGR01072">
    <property type="entry name" value="murA"/>
    <property type="match status" value="1"/>
</dbReference>
<dbReference type="NCBIfam" id="NF006873">
    <property type="entry name" value="PRK09369.1"/>
    <property type="match status" value="1"/>
</dbReference>
<dbReference type="PANTHER" id="PTHR43783">
    <property type="entry name" value="UDP-N-ACETYLGLUCOSAMINE 1-CARBOXYVINYLTRANSFERASE"/>
    <property type="match status" value="1"/>
</dbReference>
<dbReference type="PANTHER" id="PTHR43783:SF1">
    <property type="entry name" value="UDP-N-ACETYLGLUCOSAMINE 1-CARBOXYVINYLTRANSFERASE"/>
    <property type="match status" value="1"/>
</dbReference>
<dbReference type="Pfam" id="PF00275">
    <property type="entry name" value="EPSP_synthase"/>
    <property type="match status" value="1"/>
</dbReference>
<dbReference type="SUPFAM" id="SSF55205">
    <property type="entry name" value="EPT/RTPC-like"/>
    <property type="match status" value="1"/>
</dbReference>
<evidence type="ECO:0000255" key="1">
    <source>
        <dbReference type="HAMAP-Rule" id="MF_00111"/>
    </source>
</evidence>
<keyword id="KW-0131">Cell cycle</keyword>
<keyword id="KW-0132">Cell division</keyword>
<keyword id="KW-0133">Cell shape</keyword>
<keyword id="KW-0961">Cell wall biogenesis/degradation</keyword>
<keyword id="KW-0963">Cytoplasm</keyword>
<keyword id="KW-0573">Peptidoglycan synthesis</keyword>
<keyword id="KW-0670">Pyruvate</keyword>
<keyword id="KW-1185">Reference proteome</keyword>
<keyword id="KW-0808">Transferase</keyword>
<sequence>MDALLIQGGNPLAGEVRISGAKNAALPILTASLLTAEPLRLGNVPHLKDISTMLALLGHMGVRVTLDDKNHVTLSGDSIPHKEAPYEMVKTMRAAILVLGPTLARFGEARVSLPGGCAIGSRPVDLHIKGLQAMGADISIEHGYIHARCKRLQGARIVMDMVTVTGTENLMMAAALAEGTTVLENAAREPEVVDLARCLIAMGAKIEGAGTDVITVHGVEALHGAEYSVMADRIETGTFLVAAAMTGGRVRATHTSPDTLEAVISKLREAGAKVSVGDDWIEVESTGKLDSVDVRTAPHPAFPTDMQAQFMAMNTIAVGAASVTETIFENRFMHVQELRRLGANIEVSGHTALVRGVARLDGATVMATDLRASACLVLAGLVAAGETTIERIYHLDRGYERIEEKLTQLGGRIKRVH</sequence>
<accession>Q3SHP2</accession>